<protein>
    <recommendedName>
        <fullName evidence="4">Putative zinc finger protein 705EP</fullName>
    </recommendedName>
    <alternativeName>
        <fullName evidence="5">zinc finger protein 705E pseudogene</fullName>
    </alternativeName>
</protein>
<reference key="1">
    <citation type="journal article" date="2006" name="Nature">
        <title>Human chromosome 11 DNA sequence and analysis including novel gene identification.</title>
        <authorList>
            <person name="Taylor T.D."/>
            <person name="Noguchi H."/>
            <person name="Totoki Y."/>
            <person name="Toyoda A."/>
            <person name="Kuroki Y."/>
            <person name="Dewar K."/>
            <person name="Lloyd C."/>
            <person name="Itoh T."/>
            <person name="Takeda T."/>
            <person name="Kim D.-W."/>
            <person name="She X."/>
            <person name="Barlow K.F."/>
            <person name="Bloom T."/>
            <person name="Bruford E."/>
            <person name="Chang J.L."/>
            <person name="Cuomo C.A."/>
            <person name="Eichler E."/>
            <person name="FitzGerald M.G."/>
            <person name="Jaffe D.B."/>
            <person name="LaButti K."/>
            <person name="Nicol R."/>
            <person name="Park H.-S."/>
            <person name="Seaman C."/>
            <person name="Sougnez C."/>
            <person name="Yang X."/>
            <person name="Zimmer A.R."/>
            <person name="Zody M.C."/>
            <person name="Birren B.W."/>
            <person name="Nusbaum C."/>
            <person name="Fujiyama A."/>
            <person name="Hattori M."/>
            <person name="Rogers J."/>
            <person name="Lander E.S."/>
            <person name="Sakaki Y."/>
        </authorList>
    </citation>
    <scope>NUCLEOTIDE SEQUENCE [LARGE SCALE GENOMIC DNA]</scope>
</reference>
<feature type="chain" id="PRO_0000343575" description="Putative zinc finger protein 705EP">
    <location>
        <begin position="1"/>
        <end position="300"/>
    </location>
</feature>
<feature type="domain" description="KRAB" evidence="3">
    <location>
        <begin position="7"/>
        <end position="78"/>
    </location>
</feature>
<feature type="zinc finger region" description="C2H2-type 1; degenerate" evidence="2">
    <location>
        <begin position="172"/>
        <end position="194"/>
    </location>
</feature>
<feature type="zinc finger region" description="C2H2-type 2" evidence="2">
    <location>
        <begin position="200"/>
        <end position="222"/>
    </location>
</feature>
<feature type="zinc finger region" description="C2H2-type 3" evidence="2">
    <location>
        <begin position="228"/>
        <end position="250"/>
    </location>
</feature>
<feature type="zinc finger region" description="C2H2-type 4; degenerate" evidence="2">
    <location>
        <begin position="256"/>
        <end position="278"/>
    </location>
</feature>
<dbReference type="EMBL" id="AP002495">
    <property type="status" value="NOT_ANNOTATED_CDS"/>
    <property type="molecule type" value="Genomic_DNA"/>
</dbReference>
<dbReference type="RefSeq" id="NP_001265642.1">
    <property type="nucleotide sequence ID" value="NM_001278713.1"/>
</dbReference>
<dbReference type="SMR" id="A8MWA4"/>
<dbReference type="STRING" id="9606.ENSP00000492790"/>
<dbReference type="iPTMnet" id="A8MWA4"/>
<dbReference type="PhosphoSitePlus" id="A8MWA4"/>
<dbReference type="BioMuta" id="ZNF705E"/>
<dbReference type="MassIVE" id="A8MWA4"/>
<dbReference type="DNASU" id="100131539"/>
<dbReference type="AGR" id="HGNC:33203"/>
<dbReference type="GeneCards" id="ZNF705EP"/>
<dbReference type="HGNC" id="HGNC:33203">
    <property type="gene designation" value="ZNF705EP"/>
</dbReference>
<dbReference type="neXtProt" id="NX_A8MWA4"/>
<dbReference type="VEuPathDB" id="HostDB:ENSG00000214534"/>
<dbReference type="InParanoid" id="A8MWA4"/>
<dbReference type="OMA" id="IQCLLTH"/>
<dbReference type="OrthoDB" id="9520929at2759"/>
<dbReference type="PAN-GO" id="A8MWA4">
    <property type="GO annotations" value="3 GO annotations based on evolutionary models"/>
</dbReference>
<dbReference type="PhylomeDB" id="A8MWA4"/>
<dbReference type="PathwayCommons" id="A8MWA4"/>
<dbReference type="Reactome" id="R-HSA-212436">
    <property type="pathway name" value="Generic Transcription Pathway"/>
</dbReference>
<dbReference type="GenomeRNAi" id="100131539"/>
<dbReference type="Pharos" id="A8MWA4">
    <property type="development level" value="Tdark"/>
</dbReference>
<dbReference type="PRO" id="PR:A8MWA4"/>
<dbReference type="Proteomes" id="UP000005640">
    <property type="component" value="Chromosome 11"/>
</dbReference>
<dbReference type="RNAct" id="A8MWA4">
    <property type="molecule type" value="protein"/>
</dbReference>
<dbReference type="Bgee" id="ENSG00000214534">
    <property type="expression patterns" value="Expressed in calcaneal tendon and 20 other cell types or tissues"/>
</dbReference>
<dbReference type="GO" id="GO:0005634">
    <property type="term" value="C:nucleus"/>
    <property type="evidence" value="ECO:0000318"/>
    <property type="project" value="GO_Central"/>
</dbReference>
<dbReference type="GO" id="GO:0000981">
    <property type="term" value="F:DNA-binding transcription factor activity, RNA polymerase II-specific"/>
    <property type="evidence" value="ECO:0000318"/>
    <property type="project" value="GO_Central"/>
</dbReference>
<dbReference type="GO" id="GO:0000977">
    <property type="term" value="F:RNA polymerase II transcription regulatory region sequence-specific DNA binding"/>
    <property type="evidence" value="ECO:0000318"/>
    <property type="project" value="GO_Central"/>
</dbReference>
<dbReference type="GO" id="GO:0008270">
    <property type="term" value="F:zinc ion binding"/>
    <property type="evidence" value="ECO:0007669"/>
    <property type="project" value="UniProtKB-KW"/>
</dbReference>
<dbReference type="GO" id="GO:0006357">
    <property type="term" value="P:regulation of transcription by RNA polymerase II"/>
    <property type="evidence" value="ECO:0000318"/>
    <property type="project" value="GO_Central"/>
</dbReference>
<dbReference type="CDD" id="cd07765">
    <property type="entry name" value="KRAB_A-box"/>
    <property type="match status" value="1"/>
</dbReference>
<dbReference type="FunFam" id="3.30.160.60:FF:000176">
    <property type="entry name" value="zinc finger protein 70"/>
    <property type="match status" value="1"/>
</dbReference>
<dbReference type="FunFam" id="3.30.160.60:FF:002754">
    <property type="entry name" value="Zinc finger protein 705A"/>
    <property type="match status" value="1"/>
</dbReference>
<dbReference type="FunFam" id="3.30.160.60:FF:002524">
    <property type="entry name" value="Zinc finger protein 705F"/>
    <property type="match status" value="2"/>
</dbReference>
<dbReference type="FunFam" id="3.30.160.60:FF:000787">
    <property type="entry name" value="Zinc finger protein 784"/>
    <property type="match status" value="1"/>
</dbReference>
<dbReference type="FunFam" id="3.30.160.60:FF:003296">
    <property type="entry name" value="Zinc finger protein 844"/>
    <property type="match status" value="1"/>
</dbReference>
<dbReference type="Gene3D" id="6.10.140.140">
    <property type="match status" value="1"/>
</dbReference>
<dbReference type="Gene3D" id="3.30.160.60">
    <property type="entry name" value="Classic Zinc Finger"/>
    <property type="match status" value="6"/>
</dbReference>
<dbReference type="InterPro" id="IPR001909">
    <property type="entry name" value="KRAB"/>
</dbReference>
<dbReference type="InterPro" id="IPR036051">
    <property type="entry name" value="KRAB_dom_sf"/>
</dbReference>
<dbReference type="InterPro" id="IPR036236">
    <property type="entry name" value="Znf_C2H2_sf"/>
</dbReference>
<dbReference type="InterPro" id="IPR013087">
    <property type="entry name" value="Znf_C2H2_type"/>
</dbReference>
<dbReference type="PANTHER" id="PTHR24390:SF237">
    <property type="entry name" value="FI23536P1-RELATED"/>
    <property type="match status" value="1"/>
</dbReference>
<dbReference type="PANTHER" id="PTHR24390">
    <property type="entry name" value="ZINC FINGER PROTEIN"/>
    <property type="match status" value="1"/>
</dbReference>
<dbReference type="Pfam" id="PF01352">
    <property type="entry name" value="KRAB"/>
    <property type="match status" value="1"/>
</dbReference>
<dbReference type="Pfam" id="PF00096">
    <property type="entry name" value="zf-C2H2"/>
    <property type="match status" value="2"/>
</dbReference>
<dbReference type="SMART" id="SM00349">
    <property type="entry name" value="KRAB"/>
    <property type="match status" value="1"/>
</dbReference>
<dbReference type="SMART" id="SM00355">
    <property type="entry name" value="ZnF_C2H2"/>
    <property type="match status" value="3"/>
</dbReference>
<dbReference type="SUPFAM" id="SSF57667">
    <property type="entry name" value="beta-beta-alpha zinc fingers"/>
    <property type="match status" value="4"/>
</dbReference>
<dbReference type="SUPFAM" id="SSF109640">
    <property type="entry name" value="KRAB domain (Kruppel-associated box)"/>
    <property type="match status" value="1"/>
</dbReference>
<dbReference type="PROSITE" id="PS50805">
    <property type="entry name" value="KRAB"/>
    <property type="match status" value="1"/>
</dbReference>
<dbReference type="PROSITE" id="PS00028">
    <property type="entry name" value="ZINC_FINGER_C2H2_1"/>
    <property type="match status" value="2"/>
</dbReference>
<dbReference type="PROSITE" id="PS50157">
    <property type="entry name" value="ZINC_FINGER_C2H2_2"/>
    <property type="match status" value="4"/>
</dbReference>
<evidence type="ECO:0000250" key="1"/>
<evidence type="ECO:0000255" key="2">
    <source>
        <dbReference type="PROSITE-ProRule" id="PRU00042"/>
    </source>
</evidence>
<evidence type="ECO:0000255" key="3">
    <source>
        <dbReference type="PROSITE-ProRule" id="PRU00119"/>
    </source>
</evidence>
<evidence type="ECO:0000305" key="4"/>
<evidence type="ECO:0000312" key="5">
    <source>
        <dbReference type="HGNC" id="HGNC:33203"/>
    </source>
</evidence>
<comment type="function">
    <text evidence="1">May be involved in transcriptional regulation.</text>
</comment>
<comment type="subcellular location">
    <subcellularLocation>
        <location evidence="4">Nucleus</location>
    </subcellularLocation>
</comment>
<comment type="similarity">
    <text evidence="4">Belongs to the krueppel C2H2-type zinc-finger protein family.</text>
</comment>
<comment type="caution">
    <text evidence="4">Could be the product of a pseudogene.</text>
</comment>
<organism>
    <name type="scientific">Homo sapiens</name>
    <name type="common">Human</name>
    <dbReference type="NCBI Taxonomy" id="9606"/>
    <lineage>
        <taxon>Eukaryota</taxon>
        <taxon>Metazoa</taxon>
        <taxon>Chordata</taxon>
        <taxon>Craniata</taxon>
        <taxon>Vertebrata</taxon>
        <taxon>Euteleostomi</taxon>
        <taxon>Mammalia</taxon>
        <taxon>Eutheria</taxon>
        <taxon>Euarchontoglires</taxon>
        <taxon>Primates</taxon>
        <taxon>Haplorrhini</taxon>
        <taxon>Catarrhini</taxon>
        <taxon>Hominidae</taxon>
        <taxon>Homo</taxon>
    </lineage>
</organism>
<keyword id="KW-0238">DNA-binding</keyword>
<keyword id="KW-0479">Metal-binding</keyword>
<keyword id="KW-0539">Nucleus</keyword>
<keyword id="KW-1185">Reference proteome</keyword>
<keyword id="KW-0677">Repeat</keyword>
<keyword id="KW-0804">Transcription</keyword>
<keyword id="KW-0805">Transcription regulation</keyword>
<keyword id="KW-0862">Zinc</keyword>
<keyword id="KW-0863">Zinc-finger</keyword>
<gene>
    <name evidence="5" type="primary">ZNF705EP</name>
    <name evidence="5" type="synonym">ZNF705E</name>
</gene>
<name>Z705E_HUMAN</name>
<sequence>MHSLKKVTFEDVAIDFTQEEWAMMDTSKRKLYRDVMLENISHLVSLGYQISKSYIILQLEQGKELWQEGREFLQDQNPDRESALKKTHMISMHPIIRKDAPTSMTMENSLILEDPFECNDSGEDCTHSSTIIQCLLTHSGKKPYVSKQCGKSLSNLLSPKPHKQIHTKGKSYQCNLCEKAYTNCFHLRRPKMTHTGERPYTCHLCRKAFTQCSHLRRHEKTHTGERPYKCHQCGKAFIQSFNLRRHERTHLGEKWYECDNSGKAFSQSSGFRGNKIIHTGEKPHACLLCGKAFSLSSDLR</sequence>
<accession>A8MWA4</accession>
<accession>A0A1W2PRR0</accession>
<proteinExistence type="uncertain"/>